<feature type="chain" id="PRO_0000178508" description="Large ribosomal subunit protein bL28">
    <location>
        <begin position="1"/>
        <end position="65"/>
    </location>
</feature>
<feature type="region of interest" description="Disordered" evidence="2">
    <location>
        <begin position="1"/>
        <end position="26"/>
    </location>
</feature>
<feature type="compositionally biased region" description="Polar residues" evidence="2">
    <location>
        <begin position="11"/>
        <end position="22"/>
    </location>
</feature>
<keyword id="KW-1185">Reference proteome</keyword>
<keyword id="KW-0687">Ribonucleoprotein</keyword>
<keyword id="KW-0689">Ribosomal protein</keyword>
<protein>
    <recommendedName>
        <fullName evidence="1">Large ribosomal subunit protein bL28</fullName>
    </recommendedName>
    <alternativeName>
        <fullName evidence="3">50S ribosomal protein L28</fullName>
    </alternativeName>
</protein>
<evidence type="ECO:0000255" key="1">
    <source>
        <dbReference type="HAMAP-Rule" id="MF_00373"/>
    </source>
</evidence>
<evidence type="ECO:0000256" key="2">
    <source>
        <dbReference type="SAM" id="MobiDB-lite"/>
    </source>
</evidence>
<evidence type="ECO:0000305" key="3"/>
<organism>
    <name type="scientific">Mycoplasma mycoides subsp. mycoides SC (strain CCUG 32753 / NCTC 10114 / PG1)</name>
    <dbReference type="NCBI Taxonomy" id="272632"/>
    <lineage>
        <taxon>Bacteria</taxon>
        <taxon>Bacillati</taxon>
        <taxon>Mycoplasmatota</taxon>
        <taxon>Mollicutes</taxon>
        <taxon>Mycoplasmataceae</taxon>
        <taxon>Mycoplasma</taxon>
    </lineage>
</organism>
<dbReference type="EMBL" id="BX293980">
    <property type="protein sequence ID" value="CAE77111.1"/>
    <property type="status" value="ALT_INIT"/>
    <property type="molecule type" value="Genomic_DNA"/>
</dbReference>
<dbReference type="RefSeq" id="NP_975469.3">
    <property type="nucleotide sequence ID" value="NC_005364.2"/>
</dbReference>
<dbReference type="RefSeq" id="WP_015545544.1">
    <property type="nucleotide sequence ID" value="NC_005364.2"/>
</dbReference>
<dbReference type="SMR" id="Q6MTC5"/>
<dbReference type="STRING" id="272632.MSC_0483"/>
<dbReference type="KEGG" id="mmy:MSC_0483"/>
<dbReference type="PATRIC" id="fig|272632.4.peg.523"/>
<dbReference type="eggNOG" id="COG0227">
    <property type="taxonomic scope" value="Bacteria"/>
</dbReference>
<dbReference type="HOGENOM" id="CLU_064548_7_2_14"/>
<dbReference type="Proteomes" id="UP000001016">
    <property type="component" value="Chromosome"/>
</dbReference>
<dbReference type="GO" id="GO:1990904">
    <property type="term" value="C:ribonucleoprotein complex"/>
    <property type="evidence" value="ECO:0007669"/>
    <property type="project" value="UniProtKB-KW"/>
</dbReference>
<dbReference type="GO" id="GO:0005840">
    <property type="term" value="C:ribosome"/>
    <property type="evidence" value="ECO:0007669"/>
    <property type="project" value="UniProtKB-KW"/>
</dbReference>
<dbReference type="GO" id="GO:0003735">
    <property type="term" value="F:structural constituent of ribosome"/>
    <property type="evidence" value="ECO:0007669"/>
    <property type="project" value="InterPro"/>
</dbReference>
<dbReference type="GO" id="GO:0006412">
    <property type="term" value="P:translation"/>
    <property type="evidence" value="ECO:0007669"/>
    <property type="project" value="UniProtKB-UniRule"/>
</dbReference>
<dbReference type="Gene3D" id="2.30.170.40">
    <property type="entry name" value="Ribosomal protein L28/L24"/>
    <property type="match status" value="1"/>
</dbReference>
<dbReference type="HAMAP" id="MF_00373">
    <property type="entry name" value="Ribosomal_bL28"/>
    <property type="match status" value="1"/>
</dbReference>
<dbReference type="InterPro" id="IPR050096">
    <property type="entry name" value="Bacterial_rp_bL28"/>
</dbReference>
<dbReference type="InterPro" id="IPR026569">
    <property type="entry name" value="Ribosomal_bL28"/>
</dbReference>
<dbReference type="InterPro" id="IPR034704">
    <property type="entry name" value="Ribosomal_bL28/bL31-like_sf"/>
</dbReference>
<dbReference type="InterPro" id="IPR001383">
    <property type="entry name" value="Ribosomal_bL28_bact-type"/>
</dbReference>
<dbReference type="InterPro" id="IPR037147">
    <property type="entry name" value="Ribosomal_bL28_sf"/>
</dbReference>
<dbReference type="NCBIfam" id="TIGR00009">
    <property type="entry name" value="L28"/>
    <property type="match status" value="1"/>
</dbReference>
<dbReference type="PANTHER" id="PTHR39080">
    <property type="entry name" value="50S RIBOSOMAL PROTEIN L28"/>
    <property type="match status" value="1"/>
</dbReference>
<dbReference type="PANTHER" id="PTHR39080:SF1">
    <property type="entry name" value="LARGE RIBOSOMAL SUBUNIT PROTEIN BL28A"/>
    <property type="match status" value="1"/>
</dbReference>
<dbReference type="Pfam" id="PF00830">
    <property type="entry name" value="Ribosomal_L28"/>
    <property type="match status" value="1"/>
</dbReference>
<dbReference type="SUPFAM" id="SSF143800">
    <property type="entry name" value="L28p-like"/>
    <property type="match status" value="1"/>
</dbReference>
<proteinExistence type="inferred from homology"/>
<comment type="similarity">
    <text evidence="1">Belongs to the bacterial ribosomal protein bL28 family.</text>
</comment>
<comment type="sequence caution" evidence="3">
    <conflict type="erroneous initiation">
        <sequence resource="EMBL-CDS" id="CAE77111"/>
    </conflict>
</comment>
<sequence length="65" mass="7351">MARRDALTGKSALSGQSRSHALNATKRKWNLNLQKVRVMNENGSVFNIKVSARTLRTLKKQEKIV</sequence>
<name>RL28_MYCMS</name>
<gene>
    <name evidence="1" type="primary">rpmB</name>
    <name type="ordered locus">MSC_0483</name>
</gene>
<accession>Q6MTC5</accession>
<reference key="1">
    <citation type="journal article" date="2004" name="Genome Res.">
        <title>The genome sequence of Mycoplasma mycoides subsp. mycoides SC type strain PG1T, the causative agent of contagious bovine pleuropneumonia (CBPP).</title>
        <authorList>
            <person name="Westberg J."/>
            <person name="Persson A."/>
            <person name="Holmberg A."/>
            <person name="Goesmann A."/>
            <person name="Lundeberg J."/>
            <person name="Johansson K.-E."/>
            <person name="Pettersson B."/>
            <person name="Uhlen M."/>
        </authorList>
    </citation>
    <scope>NUCLEOTIDE SEQUENCE [LARGE SCALE GENOMIC DNA]</scope>
    <source>
        <strain>CCUG 32753 / NCTC 10114 / PG1</strain>
    </source>
</reference>